<evidence type="ECO:0000250" key="1"/>
<evidence type="ECO:0000305" key="2"/>
<gene>
    <name type="primary">RLP7</name>
</gene>
<accession>P32101</accession>
<sequence length="212" mass="23617">LVSDASNTKSYISRVAQDGSKSKEIYSGKPTLYLIVRTPGPVGAKIPSKVQKVLQLLRLNKINSGVFVKLTETVYPLLKLLSPYTVIXQPSLQTVRQLVQKRATVTVTHANDEEPRQVKLNDNNLVEEKLGDEGIICIEDIIHETSHLATTFKTVTHFLDPFELNKDVVGYGPLAKLRKLEKQEAEKQRKTSNSGSAPILEIDIDDFVAQQN</sequence>
<keyword id="KW-0539">Nucleus</keyword>
<keyword id="KW-0690">Ribosome biogenesis</keyword>
<keyword id="KW-0694">RNA-binding</keyword>
<dbReference type="EMBL" id="M16014">
    <property type="status" value="NOT_ANNOTATED_CDS"/>
    <property type="molecule type" value="Genomic_DNA"/>
</dbReference>
<dbReference type="GO" id="GO:0022625">
    <property type="term" value="C:cytosolic large ribosomal subunit"/>
    <property type="evidence" value="ECO:0007669"/>
    <property type="project" value="TreeGrafter"/>
</dbReference>
<dbReference type="GO" id="GO:0005730">
    <property type="term" value="C:nucleolus"/>
    <property type="evidence" value="ECO:0007669"/>
    <property type="project" value="UniProtKB-SubCell"/>
</dbReference>
<dbReference type="GO" id="GO:0003723">
    <property type="term" value="F:RNA binding"/>
    <property type="evidence" value="ECO:0007669"/>
    <property type="project" value="UniProtKB-KW"/>
</dbReference>
<dbReference type="GO" id="GO:0003735">
    <property type="term" value="F:structural constituent of ribosome"/>
    <property type="evidence" value="ECO:0007669"/>
    <property type="project" value="TreeGrafter"/>
</dbReference>
<dbReference type="GO" id="GO:0000463">
    <property type="term" value="P:maturation of LSU-rRNA from tricistronic rRNA transcript (SSU-rRNA, 5.8S rRNA, LSU-rRNA)"/>
    <property type="evidence" value="ECO:0007669"/>
    <property type="project" value="TreeGrafter"/>
</dbReference>
<dbReference type="CDD" id="cd01657">
    <property type="entry name" value="Ribosomal_L7_archeal_euk"/>
    <property type="match status" value="1"/>
</dbReference>
<dbReference type="Gene3D" id="3.30.1390.20">
    <property type="entry name" value="Ribosomal protein L30, ferredoxin-like fold domain"/>
    <property type="match status" value="1"/>
</dbReference>
<dbReference type="InterPro" id="IPR036919">
    <property type="entry name" value="Ribo_uL30_ferredoxin-like_sf"/>
</dbReference>
<dbReference type="InterPro" id="IPR039699">
    <property type="entry name" value="Ribosomal_uL30"/>
</dbReference>
<dbReference type="InterPro" id="IPR018038">
    <property type="entry name" value="Ribosomal_uL30_CS"/>
</dbReference>
<dbReference type="InterPro" id="IPR035808">
    <property type="entry name" value="Ribosomal_uL30_euk_arc"/>
</dbReference>
<dbReference type="InterPro" id="IPR016082">
    <property type="entry name" value="Ribosomal_uL30_ferredoxin-like"/>
</dbReference>
<dbReference type="PANTHER" id="PTHR11524">
    <property type="entry name" value="60S RIBOSOMAL PROTEIN L7"/>
    <property type="match status" value="1"/>
</dbReference>
<dbReference type="PANTHER" id="PTHR11524:SF26">
    <property type="entry name" value="RIBOSOME BIOGENESIS PROTEIN RLP7"/>
    <property type="match status" value="1"/>
</dbReference>
<dbReference type="Pfam" id="PF00327">
    <property type="entry name" value="Ribosomal_L30"/>
    <property type="match status" value="1"/>
</dbReference>
<dbReference type="SUPFAM" id="SSF55129">
    <property type="entry name" value="Ribosomal protein L30p/L7e"/>
    <property type="match status" value="1"/>
</dbReference>
<dbReference type="PROSITE" id="PS00634">
    <property type="entry name" value="RIBOSOMAL_L30"/>
    <property type="match status" value="1"/>
</dbReference>
<organism>
    <name type="scientific">Cyberlindnera jadinii</name>
    <name type="common">Torula yeast</name>
    <name type="synonym">Pichia jadinii</name>
    <dbReference type="NCBI Taxonomy" id="4903"/>
    <lineage>
        <taxon>Eukaryota</taxon>
        <taxon>Fungi</taxon>
        <taxon>Dikarya</taxon>
        <taxon>Ascomycota</taxon>
        <taxon>Saccharomycotina</taxon>
        <taxon>Saccharomycetes</taxon>
        <taxon>Phaffomycetales</taxon>
        <taxon>Phaffomycetaceae</taxon>
        <taxon>Cyberlindnera</taxon>
    </lineage>
</organism>
<reference key="1">
    <citation type="journal article" date="1987" name="J. Gen. Microbiol.">
        <title>Molecular cloning and nucleotide sequence of the 3-isopropylmalate dehydrogenase gene of Candida utilis.</title>
        <authorList>
            <person name="Hamasawa K."/>
            <person name="Kobayashi Y."/>
            <person name="Harada S."/>
            <person name="Yoda K."/>
            <person name="Yamasaki M."/>
            <person name="Tamura G."/>
        </authorList>
    </citation>
    <scope>NUCLEOTIDE SEQUENCE [GENOMIC DNA]</scope>
</reference>
<reference key="2">
    <citation type="journal article" date="1993" name="Nucleic Acids Res.">
        <title>Identification of a Candida utilis gene encoding ribosomal protein L7: evidence for two divergent subclasses of the eukaryotic ribosomal protein L7 family.</title>
        <authorList>
            <person name="Sharp P.M."/>
            <person name="Wolfe K.H."/>
        </authorList>
    </citation>
    <scope>SEQUENCE REVISION</scope>
    <scope>IDENTIFICATION</scope>
</reference>
<feature type="chain" id="PRO_0000104657" description="Ribosome biogenesis protein RLP7">
    <location>
        <begin position="1" status="less than"/>
        <end position="212"/>
    </location>
</feature>
<feature type="non-terminal residue">
    <location>
        <position position="1"/>
    </location>
</feature>
<protein>
    <recommendedName>
        <fullName>Ribosome biogenesis protein RLP7</fullName>
    </recommendedName>
</protein>
<comment type="function">
    <text evidence="1">Involved in the biogenesis of the 60S ribosomal subunit. May act as a specificity factor that binds precursor rRNAs and tethers the enzymes that carry out the early 5' to 3' exonucleolytic reactions that generate the mature rRNAs (By similarity).</text>
</comment>
<comment type="subcellular location">
    <subcellularLocation>
        <location evidence="1">Nucleus</location>
        <location evidence="1">Nucleolus</location>
    </subcellularLocation>
</comment>
<comment type="similarity">
    <text evidence="2">Belongs to the universal ribosomal protein uL30 family.</text>
</comment>
<proteinExistence type="inferred from homology"/>
<name>RLP7_CYBJA</name>